<gene>
    <name evidence="1" type="primary">hemC</name>
    <name type="ordered locus">Pisl_0050</name>
</gene>
<name>HEM3_PYRIL</name>
<evidence type="ECO:0000255" key="1">
    <source>
        <dbReference type="HAMAP-Rule" id="MF_00260"/>
    </source>
</evidence>
<comment type="function">
    <text evidence="1">Tetrapolymerization of the monopyrrole PBG into the hydroxymethylbilane pre-uroporphyrinogen in several discrete steps.</text>
</comment>
<comment type="catalytic activity">
    <reaction evidence="1">
        <text>4 porphobilinogen + H2O = hydroxymethylbilane + 4 NH4(+)</text>
        <dbReference type="Rhea" id="RHEA:13185"/>
        <dbReference type="ChEBI" id="CHEBI:15377"/>
        <dbReference type="ChEBI" id="CHEBI:28938"/>
        <dbReference type="ChEBI" id="CHEBI:57845"/>
        <dbReference type="ChEBI" id="CHEBI:58126"/>
        <dbReference type="EC" id="2.5.1.61"/>
    </reaction>
</comment>
<comment type="cofactor">
    <cofactor evidence="1">
        <name>dipyrromethane</name>
        <dbReference type="ChEBI" id="CHEBI:60342"/>
    </cofactor>
    <text evidence="1">Binds 1 dipyrromethane group covalently.</text>
</comment>
<comment type="pathway">
    <text evidence="1">Porphyrin-containing compound metabolism; protoporphyrin-IX biosynthesis; coproporphyrinogen-III from 5-aminolevulinate: step 2/4.</text>
</comment>
<comment type="miscellaneous">
    <text evidence="1">The porphobilinogen subunits are added to the dipyrromethane group.</text>
</comment>
<comment type="similarity">
    <text evidence="1">Belongs to the HMBS family.</text>
</comment>
<feature type="chain" id="PRO_0000304305" description="Probable porphobilinogen deaminase">
    <location>
        <begin position="1"/>
        <end position="301"/>
    </location>
</feature>
<feature type="modified residue" description="S-(dipyrrolylmethanemethyl)cysteine" evidence="1">
    <location>
        <position position="241"/>
    </location>
</feature>
<protein>
    <recommendedName>
        <fullName evidence="1">Probable porphobilinogen deaminase</fullName>
        <shortName evidence="1">PBG</shortName>
        <ecNumber evidence="1">2.5.1.61</ecNumber>
    </recommendedName>
    <alternativeName>
        <fullName evidence="1">Hydroxymethylbilane synthase</fullName>
        <shortName evidence="1">HMBS</shortName>
    </alternativeName>
    <alternativeName>
        <fullName evidence="1">Pre-uroporphyrinogen synthase</fullName>
    </alternativeName>
</protein>
<proteinExistence type="inferred from homology"/>
<sequence length="301" mass="31960">MKIRVATRGSKLSLIQTEELLAQIKAVEPDVQFEIVVVKTTGDLIQDKPLFQIGVKGIFEKEVNLAVLRGEADMAVHSLKDLPSELTPGLVLAGFSKRAPPHDVLISRGGYTLETLPKGAVVGTSSVRRAEFLKAVRPDVEVKPLRGNVDTRVGKVLSGQYDAAVMAAAGLQRLYGSSPPVSIVPLRVEEVPPPPGQGIVVAVVKEEDSWLIDLLKKASDKTAAIEATAERAFLAGVGAGCHVAIGGVAKLTPQGSLEFTAGYAAGGAKYVVKVFGEDPVEVGKRAAQLIAEVRQKFKQRD</sequence>
<organism>
    <name type="scientific">Pyrobaculum islandicum (strain DSM 4184 / JCM 9189 / GEO3)</name>
    <dbReference type="NCBI Taxonomy" id="384616"/>
    <lineage>
        <taxon>Archaea</taxon>
        <taxon>Thermoproteota</taxon>
        <taxon>Thermoprotei</taxon>
        <taxon>Thermoproteales</taxon>
        <taxon>Thermoproteaceae</taxon>
        <taxon>Pyrobaculum</taxon>
    </lineage>
</organism>
<accession>A1RQK2</accession>
<reference key="1">
    <citation type="submission" date="2006-12" db="EMBL/GenBank/DDBJ databases">
        <title>Complete sequence of Pyrobaculum islandicum DSM 4184.</title>
        <authorList>
            <person name="Copeland A."/>
            <person name="Lucas S."/>
            <person name="Lapidus A."/>
            <person name="Barry K."/>
            <person name="Detter J.C."/>
            <person name="Glavina del Rio T."/>
            <person name="Dalin E."/>
            <person name="Tice H."/>
            <person name="Pitluck S."/>
            <person name="Meincke L."/>
            <person name="Brettin T."/>
            <person name="Bruce D."/>
            <person name="Han C."/>
            <person name="Tapia R."/>
            <person name="Gilna P."/>
            <person name="Schmutz J."/>
            <person name="Larimer F."/>
            <person name="Land M."/>
            <person name="Hauser L."/>
            <person name="Kyrpides N."/>
            <person name="Mikhailova N."/>
            <person name="Cozen A.E."/>
            <person name="Fitz-Gibbon S.T."/>
            <person name="House C.H."/>
            <person name="Saltikov C."/>
            <person name="Lowe T."/>
            <person name="Richardson P."/>
        </authorList>
    </citation>
    <scope>NUCLEOTIDE SEQUENCE [LARGE SCALE GENOMIC DNA]</scope>
    <source>
        <strain>DSM 4184 / JCM 9189 / GEO3</strain>
    </source>
</reference>
<dbReference type="EC" id="2.5.1.61" evidence="1"/>
<dbReference type="EMBL" id="CP000504">
    <property type="protein sequence ID" value="ABL87234.1"/>
    <property type="molecule type" value="Genomic_DNA"/>
</dbReference>
<dbReference type="RefSeq" id="WP_011761811.1">
    <property type="nucleotide sequence ID" value="NC_008701.1"/>
</dbReference>
<dbReference type="SMR" id="A1RQK2"/>
<dbReference type="STRING" id="384616.Pisl_0050"/>
<dbReference type="GeneID" id="4616866"/>
<dbReference type="KEGG" id="pis:Pisl_0050"/>
<dbReference type="eggNOG" id="arCOG04299">
    <property type="taxonomic scope" value="Archaea"/>
</dbReference>
<dbReference type="HOGENOM" id="CLU_019704_0_2_2"/>
<dbReference type="OrthoDB" id="8042at2157"/>
<dbReference type="UniPathway" id="UPA00251">
    <property type="reaction ID" value="UER00319"/>
</dbReference>
<dbReference type="Proteomes" id="UP000002595">
    <property type="component" value="Chromosome"/>
</dbReference>
<dbReference type="GO" id="GO:0005737">
    <property type="term" value="C:cytoplasm"/>
    <property type="evidence" value="ECO:0007669"/>
    <property type="project" value="TreeGrafter"/>
</dbReference>
<dbReference type="GO" id="GO:0004418">
    <property type="term" value="F:hydroxymethylbilane synthase activity"/>
    <property type="evidence" value="ECO:0007669"/>
    <property type="project" value="UniProtKB-UniRule"/>
</dbReference>
<dbReference type="GO" id="GO:0006782">
    <property type="term" value="P:protoporphyrinogen IX biosynthetic process"/>
    <property type="evidence" value="ECO:0007669"/>
    <property type="project" value="UniProtKB-UniRule"/>
</dbReference>
<dbReference type="CDD" id="cd13644">
    <property type="entry name" value="PBP2_HemC_archaea"/>
    <property type="match status" value="1"/>
</dbReference>
<dbReference type="FunFam" id="3.40.190.10:FF:000005">
    <property type="entry name" value="Porphobilinogen deaminase"/>
    <property type="match status" value="1"/>
</dbReference>
<dbReference type="Gene3D" id="3.40.190.10">
    <property type="entry name" value="Periplasmic binding protein-like II"/>
    <property type="match status" value="2"/>
</dbReference>
<dbReference type="Gene3D" id="3.30.160.40">
    <property type="entry name" value="Porphobilinogen deaminase, C-terminal domain"/>
    <property type="match status" value="1"/>
</dbReference>
<dbReference type="HAMAP" id="MF_00260">
    <property type="entry name" value="Porphobil_deam"/>
    <property type="match status" value="1"/>
</dbReference>
<dbReference type="InterPro" id="IPR000860">
    <property type="entry name" value="HemC"/>
</dbReference>
<dbReference type="InterPro" id="IPR022419">
    <property type="entry name" value="Porphobilin_deaminase_cofac_BS"/>
</dbReference>
<dbReference type="InterPro" id="IPR022417">
    <property type="entry name" value="Porphobilin_deaminase_N"/>
</dbReference>
<dbReference type="InterPro" id="IPR022418">
    <property type="entry name" value="Porphobilinogen_deaminase_C"/>
</dbReference>
<dbReference type="InterPro" id="IPR036803">
    <property type="entry name" value="Porphobilinogen_deaminase_C_sf"/>
</dbReference>
<dbReference type="NCBIfam" id="TIGR00212">
    <property type="entry name" value="hemC"/>
    <property type="match status" value="1"/>
</dbReference>
<dbReference type="PANTHER" id="PTHR11557">
    <property type="entry name" value="PORPHOBILINOGEN DEAMINASE"/>
    <property type="match status" value="1"/>
</dbReference>
<dbReference type="PANTHER" id="PTHR11557:SF0">
    <property type="entry name" value="PORPHOBILINOGEN DEAMINASE"/>
    <property type="match status" value="1"/>
</dbReference>
<dbReference type="Pfam" id="PF01379">
    <property type="entry name" value="Porphobil_deam"/>
    <property type="match status" value="1"/>
</dbReference>
<dbReference type="Pfam" id="PF03900">
    <property type="entry name" value="Porphobil_deamC"/>
    <property type="match status" value="1"/>
</dbReference>
<dbReference type="PIRSF" id="PIRSF001438">
    <property type="entry name" value="4pyrrol_synth_OHMeBilane_synth"/>
    <property type="match status" value="1"/>
</dbReference>
<dbReference type="PRINTS" id="PR00151">
    <property type="entry name" value="PORPHBDMNASE"/>
</dbReference>
<dbReference type="SUPFAM" id="SSF53850">
    <property type="entry name" value="Periplasmic binding protein-like II"/>
    <property type="match status" value="1"/>
</dbReference>
<dbReference type="SUPFAM" id="SSF54782">
    <property type="entry name" value="Porphobilinogen deaminase (hydroxymethylbilane synthase), C-terminal domain"/>
    <property type="match status" value="1"/>
</dbReference>
<dbReference type="PROSITE" id="PS00533">
    <property type="entry name" value="PORPHOBILINOGEN_DEAM"/>
    <property type="match status" value="1"/>
</dbReference>
<keyword id="KW-0627">Porphyrin biosynthesis</keyword>
<keyword id="KW-0808">Transferase</keyword>